<dbReference type="EMBL" id="AE005176">
    <property type="protein sequence ID" value="AAK05237.1"/>
    <property type="molecule type" value="Genomic_DNA"/>
</dbReference>
<dbReference type="PIR" id="C86767">
    <property type="entry name" value="C86767"/>
</dbReference>
<dbReference type="RefSeq" id="NP_267295.1">
    <property type="nucleotide sequence ID" value="NC_002662.1"/>
</dbReference>
<dbReference type="RefSeq" id="WP_003132086.1">
    <property type="nucleotide sequence ID" value="NC_002662.1"/>
</dbReference>
<dbReference type="SMR" id="Q9CGF7"/>
<dbReference type="PaxDb" id="272623-L0193"/>
<dbReference type="EnsemblBacteria" id="AAK05237">
    <property type="protein sequence ID" value="AAK05237"/>
    <property type="gene ID" value="L0193"/>
</dbReference>
<dbReference type="KEGG" id="lla:L0193"/>
<dbReference type="PATRIC" id="fig|272623.7.peg.1217"/>
<dbReference type="eggNOG" id="COG0635">
    <property type="taxonomic scope" value="Bacteria"/>
</dbReference>
<dbReference type="HOGENOM" id="CLU_027579_2_2_9"/>
<dbReference type="OrthoDB" id="9808022at2"/>
<dbReference type="Proteomes" id="UP000002196">
    <property type="component" value="Chromosome"/>
</dbReference>
<dbReference type="GO" id="GO:0005737">
    <property type="term" value="C:cytoplasm"/>
    <property type="evidence" value="ECO:0000314"/>
    <property type="project" value="UniProtKB"/>
</dbReference>
<dbReference type="GO" id="GO:0005886">
    <property type="term" value="C:plasma membrane"/>
    <property type="evidence" value="ECO:0007669"/>
    <property type="project" value="UniProtKB-SubCell"/>
</dbReference>
<dbReference type="GO" id="GO:0051539">
    <property type="term" value="F:4 iron, 4 sulfur cluster binding"/>
    <property type="evidence" value="ECO:0000314"/>
    <property type="project" value="UniProtKB"/>
</dbReference>
<dbReference type="GO" id="GO:0004109">
    <property type="term" value="F:coproporphyrinogen oxidase activity"/>
    <property type="evidence" value="ECO:0007669"/>
    <property type="project" value="InterPro"/>
</dbReference>
<dbReference type="GO" id="GO:0046872">
    <property type="term" value="F:metal ion binding"/>
    <property type="evidence" value="ECO:0007669"/>
    <property type="project" value="UniProtKB-KW"/>
</dbReference>
<dbReference type="GO" id="GO:0006779">
    <property type="term" value="P:porphyrin-containing compound biosynthetic process"/>
    <property type="evidence" value="ECO:0000314"/>
    <property type="project" value="UniProtKB"/>
</dbReference>
<dbReference type="CDD" id="cd01335">
    <property type="entry name" value="Radical_SAM"/>
    <property type="match status" value="1"/>
</dbReference>
<dbReference type="FunFam" id="3.20.20.70:FF:000166">
    <property type="entry name" value="Heme chaperone HemW"/>
    <property type="match status" value="1"/>
</dbReference>
<dbReference type="Gene3D" id="3.20.20.70">
    <property type="entry name" value="Aldolase class I"/>
    <property type="match status" value="1"/>
</dbReference>
<dbReference type="InterPro" id="IPR013785">
    <property type="entry name" value="Aldolase_TIM"/>
</dbReference>
<dbReference type="InterPro" id="IPR034505">
    <property type="entry name" value="Coproporphyrinogen-III_oxidase"/>
</dbReference>
<dbReference type="InterPro" id="IPR006638">
    <property type="entry name" value="Elp3/MiaA/NifB-like_rSAM"/>
</dbReference>
<dbReference type="InterPro" id="IPR010723">
    <property type="entry name" value="HemN_C"/>
</dbReference>
<dbReference type="InterPro" id="IPR004559">
    <property type="entry name" value="HemW-like"/>
</dbReference>
<dbReference type="InterPro" id="IPR007197">
    <property type="entry name" value="rSAM"/>
</dbReference>
<dbReference type="NCBIfam" id="TIGR00539">
    <property type="entry name" value="hemN_rel"/>
    <property type="match status" value="1"/>
</dbReference>
<dbReference type="PANTHER" id="PTHR13932">
    <property type="entry name" value="COPROPORPHYRINIGEN III OXIDASE"/>
    <property type="match status" value="1"/>
</dbReference>
<dbReference type="PANTHER" id="PTHR13932:SF5">
    <property type="entry name" value="RADICAL S-ADENOSYL METHIONINE DOMAIN-CONTAINING PROTEIN 1, MITOCHONDRIAL"/>
    <property type="match status" value="1"/>
</dbReference>
<dbReference type="Pfam" id="PF06969">
    <property type="entry name" value="HemN_C"/>
    <property type="match status" value="1"/>
</dbReference>
<dbReference type="Pfam" id="PF04055">
    <property type="entry name" value="Radical_SAM"/>
    <property type="match status" value="1"/>
</dbReference>
<dbReference type="SFLD" id="SFLDG01082">
    <property type="entry name" value="B12-binding_domain_containing"/>
    <property type="match status" value="1"/>
</dbReference>
<dbReference type="SFLD" id="SFLDF00562">
    <property type="entry name" value="HemN-like__clustered_with_heat"/>
    <property type="match status" value="1"/>
</dbReference>
<dbReference type="SFLD" id="SFLDF00288">
    <property type="entry name" value="HemN-like__clustered_with_nucl"/>
    <property type="match status" value="1"/>
</dbReference>
<dbReference type="SFLD" id="SFLDS00029">
    <property type="entry name" value="Radical_SAM"/>
    <property type="match status" value="1"/>
</dbReference>
<dbReference type="SMART" id="SM00729">
    <property type="entry name" value="Elp3"/>
    <property type="match status" value="1"/>
</dbReference>
<dbReference type="SUPFAM" id="SSF102114">
    <property type="entry name" value="Radical SAM enzymes"/>
    <property type="match status" value="1"/>
</dbReference>
<dbReference type="PROSITE" id="PS51918">
    <property type="entry name" value="RADICAL_SAM"/>
    <property type="match status" value="1"/>
</dbReference>
<gene>
    <name evidence="4" type="primary">hemW</name>
    <name type="synonym">hemN</name>
    <name type="ordered locus">LL1139</name>
    <name type="ORF">L0193</name>
</gene>
<keyword id="KW-0004">4Fe-4S</keyword>
<keyword id="KW-1003">Cell membrane</keyword>
<keyword id="KW-0143">Chaperone</keyword>
<keyword id="KW-0963">Cytoplasm</keyword>
<keyword id="KW-0349">Heme</keyword>
<keyword id="KW-0408">Iron</keyword>
<keyword id="KW-0411">Iron-sulfur</keyword>
<keyword id="KW-0472">Membrane</keyword>
<keyword id="KW-0479">Metal-binding</keyword>
<keyword id="KW-1185">Reference proteome</keyword>
<keyword id="KW-0949">S-adenosyl-L-methionine</keyword>
<sequence length="379" mass="43553">MLQKPNSAYFHIPFCSHICYYCDFAKVLMTGQPIDAYIESLIEEFQSFEIEKLRTIYIGGGTPSVLSAQQLERLLTAIAEQLDLEVLEEFTVEANPGDLSDEVIKVLADSAVNRISLGVQTFNNALLKKIGRTHTEVQVYDSVERLKKAGFENITIDLIYALPGQTMEMVKSDVEKFLELKLPHVALYSLILEDHTVFMNRQRRGLLRLPSEDKNADMYEYIMDILAKNGYNHYEVSNFGLPGFESKHNITYWDNEEYYGIGAGASGYLAGIRYKNLGPVHHYLKAAPTEKRINEEVLSKKSQIEEEMFLGLRKKSGVLVEKFENKFKCSFEKLYGEQITELINQKLLYNDRQRIHMTDKGFELGNNVFEKFLLDDINF</sequence>
<comment type="function">
    <text evidence="3 6">Could serve in the delivery of heme to a membrane-localized target protein (Probable). Binds one molecule of heme per monomer, possibly covalently; heme and Fe-S cluster binding are independent. Incubation with the reductant sodium dithionite increases binding. Does not have coproporphyrinogen III dehydrogenase activity in vitro, does not complement an E.coli hemN deletion in vivo (PubMed:22142238). Binds 1 Fe-S cluster, it is probably [4Fe-4S]. The cluster is coordinated with 3 cysteines and an exchangeable S-adenosyl-L-methionine; only dimeric protein has the cluster (Probable).</text>
</comment>
<comment type="subunit">
    <text evidence="3">Homodimer.</text>
</comment>
<comment type="subcellular location">
    <subcellularLocation>
        <location evidence="3">Cytoplasm</location>
    </subcellularLocation>
    <subcellularLocation>
        <location evidence="6">Cell membrane</location>
    </subcellularLocation>
    <text evidence="6">A minor, heme-containing fraction is associated with the cell membrane.</text>
</comment>
<comment type="miscellaneous">
    <text evidence="5">L.lactis does not synthesize heme, but is able to take it up from growth medium and to incorporate it into cytochromes.</text>
</comment>
<comment type="miscellaneous">
    <text evidence="1">Might carry two S-adenosyl-L-methionine binding sites with only one binding to the iron-sulfur cluster.</text>
</comment>
<comment type="similarity">
    <text evidence="5">Belongs to the anaerobic coproporphyrinogen-III oxidase family. HemW subfamily.</text>
</comment>
<organism>
    <name type="scientific">Lactococcus lactis subsp. lactis (strain IL1403)</name>
    <name type="common">Streptococcus lactis</name>
    <dbReference type="NCBI Taxonomy" id="272623"/>
    <lineage>
        <taxon>Bacteria</taxon>
        <taxon>Bacillati</taxon>
        <taxon>Bacillota</taxon>
        <taxon>Bacilli</taxon>
        <taxon>Lactobacillales</taxon>
        <taxon>Streptococcaceae</taxon>
        <taxon>Lactococcus</taxon>
    </lineage>
</organism>
<reference key="1">
    <citation type="journal article" date="2001" name="Genome Res.">
        <title>The complete genome sequence of the lactic acid bacterium Lactococcus lactis ssp. lactis IL1403.</title>
        <authorList>
            <person name="Bolotin A."/>
            <person name="Wincker P."/>
            <person name="Mauger S."/>
            <person name="Jaillon O."/>
            <person name="Malarme K."/>
            <person name="Weissenbach J."/>
            <person name="Ehrlich S.D."/>
            <person name="Sorokin A."/>
        </authorList>
    </citation>
    <scope>NUCLEOTIDE SEQUENCE [LARGE SCALE GENOMIC DNA]</scope>
    <source>
        <strain>IL1403</strain>
    </source>
</reference>
<reference key="2">
    <citation type="journal article" date="2012" name="Biochem. J.">
        <title>Lactococcus lactis HemW (HemN) is a haem-binding protein with a putative role in haem trafficking.</title>
        <authorList>
            <person name="Abicht H.K."/>
            <person name="Martinez J."/>
            <person name="Layer G."/>
            <person name="Jahn D."/>
            <person name="Solioz M."/>
        </authorList>
    </citation>
    <scope>FUNCTION</scope>
    <scope>4FE-4S CLUSTER-BINDING</scope>
    <scope>SUBCELLULAR LOCATION</scope>
    <scope>SUBUNIT</scope>
    <scope>HEME-BINDING</scope>
    <source>
        <strain>IL1403</strain>
    </source>
</reference>
<evidence type="ECO:0000250" key="1">
    <source>
        <dbReference type="UniProtKB" id="P32131"/>
    </source>
</evidence>
<evidence type="ECO:0000255" key="2">
    <source>
        <dbReference type="PROSITE-ProRule" id="PRU01266"/>
    </source>
</evidence>
<evidence type="ECO:0000269" key="3">
    <source>
    </source>
</evidence>
<evidence type="ECO:0000303" key="4">
    <source>
    </source>
</evidence>
<evidence type="ECO:0000305" key="5"/>
<evidence type="ECO:0000305" key="6">
    <source>
    </source>
</evidence>
<accession>Q9CGF7</accession>
<proteinExistence type="evidence at protein level"/>
<protein>
    <recommendedName>
        <fullName>Heme chaperone HemW</fullName>
    </recommendedName>
</protein>
<name>HEMW_LACLA</name>
<feature type="chain" id="PRO_0000428713" description="Heme chaperone HemW">
    <location>
        <begin position="1"/>
        <end position="379"/>
    </location>
</feature>
<feature type="domain" description="Radical SAM core" evidence="2">
    <location>
        <begin position="1"/>
        <end position="232"/>
    </location>
</feature>
<feature type="binding site" evidence="1">
    <location>
        <position position="9"/>
    </location>
    <ligand>
        <name>S-adenosyl-L-methionine</name>
        <dbReference type="ChEBI" id="CHEBI:59789"/>
        <label>1</label>
    </ligand>
</feature>
<feature type="binding site" evidence="1">
    <location>
        <position position="15"/>
    </location>
    <ligand>
        <name>[4Fe-4S] cluster</name>
        <dbReference type="ChEBI" id="CHEBI:49883"/>
        <note>4Fe-4S-S-AdoMet</note>
    </ligand>
</feature>
<feature type="binding site" evidence="1">
    <location>
        <position position="19"/>
    </location>
    <ligand>
        <name>[4Fe-4S] cluster</name>
        <dbReference type="ChEBI" id="CHEBI:49883"/>
        <note>4Fe-4S-S-AdoMet</note>
    </ligand>
</feature>
<feature type="binding site" evidence="1">
    <location>
        <position position="22"/>
    </location>
    <ligand>
        <name>[4Fe-4S] cluster</name>
        <dbReference type="ChEBI" id="CHEBI:49883"/>
        <note>4Fe-4S-S-AdoMet</note>
    </ligand>
</feature>
<feature type="binding site" evidence="1">
    <location>
        <position position="60"/>
    </location>
    <ligand>
        <name>S-adenosyl-L-methionine</name>
        <dbReference type="ChEBI" id="CHEBI:59789"/>
        <label>1</label>
    </ligand>
</feature>
<feature type="binding site" evidence="1">
    <location>
        <begin position="61"/>
        <end position="62"/>
    </location>
    <ligand>
        <name>S-adenosyl-L-methionine</name>
        <dbReference type="ChEBI" id="CHEBI:59789"/>
        <label>2</label>
    </ligand>
</feature>
<feature type="binding site" evidence="1">
    <location>
        <position position="93"/>
    </location>
    <ligand>
        <name>S-adenosyl-L-methionine</name>
        <dbReference type="ChEBI" id="CHEBI:59789"/>
        <label>1</label>
    </ligand>
</feature>
<feature type="binding site" evidence="1">
    <location>
        <position position="120"/>
    </location>
    <ligand>
        <name>S-adenosyl-L-methionine</name>
        <dbReference type="ChEBI" id="CHEBI:59789"/>
        <label>2</label>
    </ligand>
</feature>
<feature type="binding site" evidence="1">
    <location>
        <position position="132"/>
    </location>
    <ligand>
        <name>S-adenosyl-L-methionine</name>
        <dbReference type="ChEBI" id="CHEBI:59789"/>
        <label>2</label>
    </ligand>
</feature>
<feature type="binding site" evidence="1">
    <location>
        <position position="157"/>
    </location>
    <ligand>
        <name>S-adenosyl-L-methionine</name>
        <dbReference type="ChEBI" id="CHEBI:59789"/>
        <label>2</label>
    </ligand>
</feature>